<reference key="1">
    <citation type="journal article" date="2006" name="Genome Biol.">
        <title>Genomic analysis reveals that Pseudomonas aeruginosa virulence is combinatorial.</title>
        <authorList>
            <person name="Lee D.G."/>
            <person name="Urbach J.M."/>
            <person name="Wu G."/>
            <person name="Liberati N.T."/>
            <person name="Feinbaum R.L."/>
            <person name="Miyata S."/>
            <person name="Diggins L.T."/>
            <person name="He J."/>
            <person name="Saucier M."/>
            <person name="Deziel E."/>
            <person name="Friedman L."/>
            <person name="Li L."/>
            <person name="Grills G."/>
            <person name="Montgomery K."/>
            <person name="Kucherlapati R."/>
            <person name="Rahme L.G."/>
            <person name="Ausubel F.M."/>
        </authorList>
    </citation>
    <scope>NUCLEOTIDE SEQUENCE [LARGE SCALE GENOMIC DNA]</scope>
    <source>
        <strain>UCBPP-PA14</strain>
    </source>
</reference>
<organism>
    <name type="scientific">Pseudomonas aeruginosa (strain UCBPP-PA14)</name>
    <dbReference type="NCBI Taxonomy" id="208963"/>
    <lineage>
        <taxon>Bacteria</taxon>
        <taxon>Pseudomonadati</taxon>
        <taxon>Pseudomonadota</taxon>
        <taxon>Gammaproteobacteria</taxon>
        <taxon>Pseudomonadales</taxon>
        <taxon>Pseudomonadaceae</taxon>
        <taxon>Pseudomonas</taxon>
    </lineage>
</organism>
<gene>
    <name evidence="1" type="primary">rpsO</name>
    <name type="ordered locus">PA14_62720</name>
</gene>
<proteinExistence type="inferred from homology"/>
<protein>
    <recommendedName>
        <fullName evidence="1">Small ribosomal subunit protein uS15</fullName>
    </recommendedName>
    <alternativeName>
        <fullName evidence="2">30S ribosomal protein S15</fullName>
    </alternativeName>
</protein>
<dbReference type="EMBL" id="CP000438">
    <property type="protein sequence ID" value="ABJ14124.1"/>
    <property type="molecule type" value="Genomic_DNA"/>
</dbReference>
<dbReference type="RefSeq" id="WP_003095184.1">
    <property type="nucleotide sequence ID" value="NZ_CP034244.1"/>
</dbReference>
<dbReference type="SMR" id="Q02FT1"/>
<dbReference type="GeneID" id="77223276"/>
<dbReference type="KEGG" id="pau:PA14_62720"/>
<dbReference type="PseudoCAP" id="PA14_62720"/>
<dbReference type="HOGENOM" id="CLU_148518_0_0_6"/>
<dbReference type="BioCyc" id="PAER208963:G1G74-5304-MONOMER"/>
<dbReference type="Proteomes" id="UP000000653">
    <property type="component" value="Chromosome"/>
</dbReference>
<dbReference type="GO" id="GO:0022627">
    <property type="term" value="C:cytosolic small ribosomal subunit"/>
    <property type="evidence" value="ECO:0007669"/>
    <property type="project" value="TreeGrafter"/>
</dbReference>
<dbReference type="GO" id="GO:0019843">
    <property type="term" value="F:rRNA binding"/>
    <property type="evidence" value="ECO:0007669"/>
    <property type="project" value="UniProtKB-UniRule"/>
</dbReference>
<dbReference type="GO" id="GO:0003735">
    <property type="term" value="F:structural constituent of ribosome"/>
    <property type="evidence" value="ECO:0007669"/>
    <property type="project" value="InterPro"/>
</dbReference>
<dbReference type="GO" id="GO:0006412">
    <property type="term" value="P:translation"/>
    <property type="evidence" value="ECO:0007669"/>
    <property type="project" value="UniProtKB-UniRule"/>
</dbReference>
<dbReference type="CDD" id="cd00353">
    <property type="entry name" value="Ribosomal_S15p_S13e"/>
    <property type="match status" value="1"/>
</dbReference>
<dbReference type="FunFam" id="1.10.287.10:FF:000002">
    <property type="entry name" value="30S ribosomal protein S15"/>
    <property type="match status" value="1"/>
</dbReference>
<dbReference type="Gene3D" id="6.10.250.3130">
    <property type="match status" value="1"/>
</dbReference>
<dbReference type="Gene3D" id="1.10.287.10">
    <property type="entry name" value="S15/NS1, RNA-binding"/>
    <property type="match status" value="1"/>
</dbReference>
<dbReference type="HAMAP" id="MF_01343_B">
    <property type="entry name" value="Ribosomal_uS15_B"/>
    <property type="match status" value="1"/>
</dbReference>
<dbReference type="InterPro" id="IPR000589">
    <property type="entry name" value="Ribosomal_uS15"/>
</dbReference>
<dbReference type="InterPro" id="IPR005290">
    <property type="entry name" value="Ribosomal_uS15_bac-type"/>
</dbReference>
<dbReference type="InterPro" id="IPR009068">
    <property type="entry name" value="uS15_NS1_RNA-bd_sf"/>
</dbReference>
<dbReference type="NCBIfam" id="TIGR00952">
    <property type="entry name" value="S15_bact"/>
    <property type="match status" value="1"/>
</dbReference>
<dbReference type="PANTHER" id="PTHR23321">
    <property type="entry name" value="RIBOSOMAL PROTEIN S15, BACTERIAL AND ORGANELLAR"/>
    <property type="match status" value="1"/>
</dbReference>
<dbReference type="PANTHER" id="PTHR23321:SF26">
    <property type="entry name" value="SMALL RIBOSOMAL SUBUNIT PROTEIN US15M"/>
    <property type="match status" value="1"/>
</dbReference>
<dbReference type="Pfam" id="PF00312">
    <property type="entry name" value="Ribosomal_S15"/>
    <property type="match status" value="1"/>
</dbReference>
<dbReference type="SMART" id="SM01387">
    <property type="entry name" value="Ribosomal_S15"/>
    <property type="match status" value="1"/>
</dbReference>
<dbReference type="SUPFAM" id="SSF47060">
    <property type="entry name" value="S15/NS1 RNA-binding domain"/>
    <property type="match status" value="1"/>
</dbReference>
<dbReference type="PROSITE" id="PS00362">
    <property type="entry name" value="RIBOSOMAL_S15"/>
    <property type="match status" value="1"/>
</dbReference>
<comment type="function">
    <text evidence="1">One of the primary rRNA binding proteins, it binds directly to 16S rRNA where it helps nucleate assembly of the platform of the 30S subunit by binding and bridging several RNA helices of the 16S rRNA.</text>
</comment>
<comment type="function">
    <text evidence="1">Forms an intersubunit bridge (bridge B4) with the 23S rRNA of the 50S subunit in the ribosome.</text>
</comment>
<comment type="subunit">
    <text evidence="1">Part of the 30S ribosomal subunit. Forms a bridge to the 50S subunit in the 70S ribosome, contacting the 23S rRNA.</text>
</comment>
<comment type="similarity">
    <text evidence="1">Belongs to the universal ribosomal protein uS15 family.</text>
</comment>
<accession>Q02FT1</accession>
<feature type="chain" id="PRO_1000054845" description="Small ribosomal subunit protein uS15">
    <location>
        <begin position="1"/>
        <end position="89"/>
    </location>
</feature>
<evidence type="ECO:0000255" key="1">
    <source>
        <dbReference type="HAMAP-Rule" id="MF_01343"/>
    </source>
</evidence>
<evidence type="ECO:0000305" key="2"/>
<keyword id="KW-0687">Ribonucleoprotein</keyword>
<keyword id="KW-0689">Ribosomal protein</keyword>
<keyword id="KW-0694">RNA-binding</keyword>
<keyword id="KW-0699">rRNA-binding</keyword>
<sequence length="89" mass="10116">MALSVEEKAQIVNEYKQAEGDTGSPEVQVALLSANINKLQDHFKANGKDHHSRRGLIRMVNQRRKLLDYLKGKDVSRYTALIGRLGLRR</sequence>
<name>RS15_PSEAB</name>